<feature type="chain" id="PRO_0000437116" description="Cytochrome P450 monooxygenase patI">
    <location>
        <begin position="1"/>
        <end position="529"/>
    </location>
</feature>
<feature type="topological domain" description="Cytoplasmic" evidence="10">
    <location>
        <begin position="1"/>
        <end position="8"/>
    </location>
</feature>
<feature type="transmembrane region" description="Helical" evidence="3">
    <location>
        <begin position="9"/>
        <end position="25"/>
    </location>
</feature>
<feature type="topological domain" description="Lumenal" evidence="10">
    <location>
        <begin position="26"/>
        <end position="529"/>
    </location>
</feature>
<feature type="binding site" description="axial binding residue" evidence="2">
    <location>
        <position position="449"/>
    </location>
    <ligand>
        <name>heme</name>
        <dbReference type="ChEBI" id="CHEBI:30413"/>
    </ligand>
    <ligandPart>
        <name>Fe</name>
        <dbReference type="ChEBI" id="CHEBI:18248"/>
    </ligandPart>
</feature>
<feature type="glycosylation site" description="N-linked (GlcNAc...) asparagine" evidence="4">
    <location>
        <position position="81"/>
    </location>
</feature>
<feature type="glycosylation site" description="N-linked (GlcNAc...) asparagine" evidence="4">
    <location>
        <position position="383"/>
    </location>
</feature>
<proteinExistence type="evidence at protein level"/>
<organism>
    <name type="scientific">Aspergillus clavatus (strain ATCC 1007 / CBS 513.65 / DSM 816 / NCTC 3887 / NRRL 1 / QM 1276 / 107)</name>
    <dbReference type="NCBI Taxonomy" id="344612"/>
    <lineage>
        <taxon>Eukaryota</taxon>
        <taxon>Fungi</taxon>
        <taxon>Dikarya</taxon>
        <taxon>Ascomycota</taxon>
        <taxon>Pezizomycotina</taxon>
        <taxon>Eurotiomycetes</taxon>
        <taxon>Eurotiomycetidae</taxon>
        <taxon>Eurotiales</taxon>
        <taxon>Aspergillaceae</taxon>
        <taxon>Aspergillus</taxon>
        <taxon>Aspergillus subgen. Fumigati</taxon>
    </lineage>
</organism>
<keyword id="KW-0256">Endoplasmic reticulum</keyword>
<keyword id="KW-0325">Glycoprotein</keyword>
<keyword id="KW-0349">Heme</keyword>
<keyword id="KW-0408">Iron</keyword>
<keyword id="KW-0472">Membrane</keyword>
<keyword id="KW-0479">Metal-binding</keyword>
<keyword id="KW-0503">Monooxygenase</keyword>
<keyword id="KW-0560">Oxidoreductase</keyword>
<keyword id="KW-1185">Reference proteome</keyword>
<keyword id="KW-0812">Transmembrane</keyword>
<keyword id="KW-1133">Transmembrane helix</keyword>
<accession>A1CFL6</accession>
<reference key="1">
    <citation type="journal article" date="2008" name="PLoS Genet.">
        <title>Genomic islands in the pathogenic filamentous fungus Aspergillus fumigatus.</title>
        <authorList>
            <person name="Fedorova N.D."/>
            <person name="Khaldi N."/>
            <person name="Joardar V.S."/>
            <person name="Maiti R."/>
            <person name="Amedeo P."/>
            <person name="Anderson M.J."/>
            <person name="Crabtree J."/>
            <person name="Silva J.C."/>
            <person name="Badger J.H."/>
            <person name="Albarraq A."/>
            <person name="Angiuoli S."/>
            <person name="Bussey H."/>
            <person name="Bowyer P."/>
            <person name="Cotty P.J."/>
            <person name="Dyer P.S."/>
            <person name="Egan A."/>
            <person name="Galens K."/>
            <person name="Fraser-Liggett C.M."/>
            <person name="Haas B.J."/>
            <person name="Inman J.M."/>
            <person name="Kent R."/>
            <person name="Lemieux S."/>
            <person name="Malavazi I."/>
            <person name="Orvis J."/>
            <person name="Roemer T."/>
            <person name="Ronning C.M."/>
            <person name="Sundaram J.P."/>
            <person name="Sutton G."/>
            <person name="Turner G."/>
            <person name="Venter J.C."/>
            <person name="White O.R."/>
            <person name="Whitty B.R."/>
            <person name="Youngman P."/>
            <person name="Wolfe K.H."/>
            <person name="Goldman G.H."/>
            <person name="Wortman J.R."/>
            <person name="Jiang B."/>
            <person name="Denning D.W."/>
            <person name="Nierman W.C."/>
        </authorList>
    </citation>
    <scope>NUCLEOTIDE SEQUENCE [LARGE SCALE GENOMIC DNA]</scope>
    <source>
        <strain>ATCC 1007 / CBS 513.65 / DSM 816 / NCTC 3887 / NRRL 1 / QM 1276 / 107</strain>
    </source>
</reference>
<reference key="2">
    <citation type="journal article" date="2004" name="Int. J. Epidemiol.">
        <title>Clinical trial of patulin in the common cold. 1944.</title>
        <authorList>
            <consortium name="Patulin Clinical Trials Committee, Medical Research Council"/>
        </authorList>
    </citation>
    <scope>BIOTECHNOLOGY</scope>
</reference>
<reference key="3">
    <citation type="journal article" date="2009" name="Microbiology">
        <title>Molecular cloning and functional characterization of two CYP619 cytochrome P450s involved in biosynthesis of patulin in Aspergillus clavatus.</title>
        <authorList>
            <person name="Artigot M.P."/>
            <person name="Loiseau N."/>
            <person name="Laffitte J."/>
            <person name="Mas-Reguieg L."/>
            <person name="Tadrist S."/>
            <person name="Oswald I.P."/>
            <person name="Puel O."/>
        </authorList>
    </citation>
    <scope>FUNCTION</scope>
    <scope>CATALYTIC ACTIVITY</scope>
</reference>
<reference key="4">
    <citation type="journal article" date="2012" name="Food Chem. Toxicol.">
        <title>DNA damage in organs of mice treated acutely with patulin, a known mycotoxin.</title>
        <authorList>
            <person name="de Melo F.T."/>
            <person name="de Oliveira I.M."/>
            <person name="Greggio S."/>
            <person name="Dacosta J.C."/>
            <person name="Guecheva T.N."/>
            <person name="Saffi J."/>
            <person name="Henriques J.A."/>
            <person name="Rosa R.M."/>
        </authorList>
    </citation>
    <scope>BIOTECHNOLOGY</scope>
</reference>
<reference key="5">
    <citation type="journal article" date="2016" name="Tumor Biol.">
        <title>The potential effect of patulin on mice bearing melanoma cells: an anti-tumour or carcinogenic effect?</title>
        <authorList>
            <person name="Boussabbeh M."/>
            <person name="Ben Salem I."/>
            <person name="Rjiba-Touati K."/>
            <person name="Bouyahya C."/>
            <person name="Neffati F."/>
            <person name="Najjar M.F."/>
            <person name="Bacha H."/>
            <person name="Abid-Essefi S."/>
        </authorList>
    </citation>
    <scope>BIOTECHNOLOGY</scope>
</reference>
<sequence length="529" mass="60665">MDFTQVPPSYILGVLLSSTSILFCLKYLLRSGYRPPELPSGPTTVPLFGNELQVPKADAHFQFTKWAKQYGGMFSLKRYMNTTIVITDRKLMKSLLDKKSNIYSHRPASLVSHLITQSDHLLVMQYGEEWRMLRKIIHQYFMEPNCEREHWKVQEAEAKQMLHDFLTMPEDHMLHPKRYSNSITNSLVFGIRTATVHDEYMDELFYLMDKWSLVQELGATPPVDSFGLLRILPQWMLGNWKNRAVEVGDLMQALYSKVLDQVRARRQRGVYRDSFMDRVLDNLEKTPLTENQLRFLGGVLMEGGSDTSSSLILTIIQAMTKYPEVQAKAHAQIDAVVGSERSPSWSDFAQLPYINMIIKESHRWRPVSPLGVPHAVAEDDRVNNTLIPKGSTIVLNVWGMHHDPDRWSEPEHFQPDRFADYPALASTYAASGEWDKRDHYGYGAGRRICPGIHLAERNLFIGVAKLLWAFEFSEPLGSRSDISAESGASQGFLHCPKDYGCAIRLRAPEKRETIMREFEEAQGVFSRFD</sequence>
<protein>
    <recommendedName>
        <fullName evidence="9">Cytochrome P450 monooxygenase patI</fullName>
        <ecNumber evidence="6">1.-.-.-</ecNumber>
    </recommendedName>
    <alternativeName>
        <fullName evidence="9">Patulin synthesis protein I</fullName>
    </alternativeName>
    <alternativeName>
        <fullName evidence="9">m-hydroxybenzyl alcohol hydroxylase</fullName>
    </alternativeName>
</protein>
<evidence type="ECO:0000250" key="1">
    <source>
        <dbReference type="UniProtKB" id="A0A075TMP8"/>
    </source>
</evidence>
<evidence type="ECO:0000250" key="2">
    <source>
        <dbReference type="UniProtKB" id="P04798"/>
    </source>
</evidence>
<evidence type="ECO:0000255" key="3"/>
<evidence type="ECO:0000255" key="4">
    <source>
        <dbReference type="PROSITE-ProRule" id="PRU00498"/>
    </source>
</evidence>
<evidence type="ECO:0000269" key="5">
    <source>
    </source>
</evidence>
<evidence type="ECO:0000269" key="6">
    <source>
    </source>
</evidence>
<evidence type="ECO:0000269" key="7">
    <source>
    </source>
</evidence>
<evidence type="ECO:0000269" key="8">
    <source>
    </source>
</evidence>
<evidence type="ECO:0000303" key="9">
    <source>
    </source>
</evidence>
<evidence type="ECO:0000305" key="10"/>
<evidence type="ECO:0000305" key="11">
    <source>
    </source>
</evidence>
<gene>
    <name evidence="9" type="primary">patI</name>
    <name evidence="9" type="synonym">CYP619C2</name>
    <name type="ORF">ACLA_093640</name>
</gene>
<dbReference type="EC" id="1.-.-.-" evidence="6"/>
<dbReference type="EMBL" id="DS027052">
    <property type="protein sequence ID" value="EAW11665.1"/>
    <property type="status" value="ALT_INIT"/>
    <property type="molecule type" value="Genomic_DNA"/>
</dbReference>
<dbReference type="RefSeq" id="XP_001273091.1">
    <property type="nucleotide sequence ID" value="XM_001273090.1"/>
</dbReference>
<dbReference type="SMR" id="A1CFL6"/>
<dbReference type="STRING" id="344612.A1CFL6"/>
<dbReference type="GlyCosmos" id="A1CFL6">
    <property type="glycosylation" value="2 sites, No reported glycans"/>
</dbReference>
<dbReference type="EnsemblFungi" id="EAW11665">
    <property type="protein sequence ID" value="EAW11665"/>
    <property type="gene ID" value="ACLA_093640"/>
</dbReference>
<dbReference type="GeneID" id="4704853"/>
<dbReference type="KEGG" id="act:ACLA_093640"/>
<dbReference type="eggNOG" id="KOG0156">
    <property type="taxonomic scope" value="Eukaryota"/>
</dbReference>
<dbReference type="HOGENOM" id="CLU_001570_2_1_1"/>
<dbReference type="OrthoDB" id="1103324at2759"/>
<dbReference type="UniPathway" id="UPA00918"/>
<dbReference type="Proteomes" id="UP000006701">
    <property type="component" value="Unassembled WGS sequence"/>
</dbReference>
<dbReference type="GO" id="GO:0005783">
    <property type="term" value="C:endoplasmic reticulum"/>
    <property type="evidence" value="ECO:0000250"/>
    <property type="project" value="GO_Central"/>
</dbReference>
<dbReference type="GO" id="GO:0005789">
    <property type="term" value="C:endoplasmic reticulum membrane"/>
    <property type="evidence" value="ECO:0007669"/>
    <property type="project" value="UniProtKB-SubCell"/>
</dbReference>
<dbReference type="GO" id="GO:0020037">
    <property type="term" value="F:heme binding"/>
    <property type="evidence" value="ECO:0007669"/>
    <property type="project" value="InterPro"/>
</dbReference>
<dbReference type="GO" id="GO:0005506">
    <property type="term" value="F:iron ion binding"/>
    <property type="evidence" value="ECO:0007669"/>
    <property type="project" value="InterPro"/>
</dbReference>
<dbReference type="GO" id="GO:0004497">
    <property type="term" value="F:monooxygenase activity"/>
    <property type="evidence" value="ECO:0000314"/>
    <property type="project" value="GO_Central"/>
</dbReference>
<dbReference type="GO" id="GO:0016705">
    <property type="term" value="F:oxidoreductase activity, acting on paired donors, with incorporation or reduction of molecular oxygen"/>
    <property type="evidence" value="ECO:0007669"/>
    <property type="project" value="InterPro"/>
</dbReference>
<dbReference type="GO" id="GO:0140723">
    <property type="term" value="P:patulin biosynthetic process"/>
    <property type="evidence" value="ECO:0000314"/>
    <property type="project" value="GO_Central"/>
</dbReference>
<dbReference type="CDD" id="cd11065">
    <property type="entry name" value="CYP64-like"/>
    <property type="match status" value="1"/>
</dbReference>
<dbReference type="Gene3D" id="1.10.630.10">
    <property type="entry name" value="Cytochrome P450"/>
    <property type="match status" value="1"/>
</dbReference>
<dbReference type="InterPro" id="IPR001128">
    <property type="entry name" value="Cyt_P450"/>
</dbReference>
<dbReference type="InterPro" id="IPR002401">
    <property type="entry name" value="Cyt_P450_E_grp-I"/>
</dbReference>
<dbReference type="InterPro" id="IPR036396">
    <property type="entry name" value="Cyt_P450_sf"/>
</dbReference>
<dbReference type="InterPro" id="IPR050364">
    <property type="entry name" value="Cytochrome_P450_fung"/>
</dbReference>
<dbReference type="PANTHER" id="PTHR46300:SF2">
    <property type="entry name" value="CYTOCHROME P450 MONOOXYGENASE ALNH-RELATED"/>
    <property type="match status" value="1"/>
</dbReference>
<dbReference type="PANTHER" id="PTHR46300">
    <property type="entry name" value="P450, PUTATIVE (EUROFUNG)-RELATED-RELATED"/>
    <property type="match status" value="1"/>
</dbReference>
<dbReference type="Pfam" id="PF00067">
    <property type="entry name" value="p450"/>
    <property type="match status" value="1"/>
</dbReference>
<dbReference type="PRINTS" id="PR00463">
    <property type="entry name" value="EP450I"/>
</dbReference>
<dbReference type="SUPFAM" id="SSF48264">
    <property type="entry name" value="Cytochrome P450"/>
    <property type="match status" value="1"/>
</dbReference>
<name>PATI_ASPCL</name>
<comment type="function">
    <text evidence="6 11">Cytochrome P450 monooxygenase; part of the gene cluster that mediates the biosynthesis of patulin, an acetate-derived tetraketide mycotoxin produced by several fungal species that shows antimicrobial properties against several bacteria (PubMed:19383676). PatI catalyzes the conversion of m-hydroxybenzyl alcohol into gentisyl alcohol (PubMed:19383676). The pathway begins with the synthesis of 6-methylsalicylic acid by the polyketide synthase (PKS) patK via condensation of acetate and malonate units. The 6-methylsalicylic acid decarboxylase patG then catalyzes the decarboxylation of 6-methylsalicylic acid to yield m-cresol (also known as 3-methylphenol). These first reactions occur in the cytosol. The intermediate m-cresol is then transported into the endoplasmic reticulum where the cytochrome P450 monooxygenase patH converts it to m-hydroxybenzyl alcohol, which is further converted to gentisyl alcohol by the cytochrome P450 monooxygenase patI. The oxidoreductases patJ and patO further convert gentisyl alcohol to isoepoxydon in the vacuole. PatN catalyzes then the transformation of isoepoxydon into phyllostine. The cluster protein patF is responsible for the conversion from phyllostine to neopatulin whereas the alcohol dehydrogenase patD converts neopatulin to E-ascladiol. The steps between isoepoxydon and E-ascladiol occur in the cytosol, and E-ascladiol is probably secreted to the extracellular space by one of the cluster-specific transporters patC or patM. Finally, the secreted patulin synthase patE catalyzes the conversion of E-ascladiol to patulin (Probable) (PubMed:19383676).</text>
</comment>
<comment type="catalytic activity">
    <reaction evidence="6">
        <text>3-hydroxybenzyl alcohol + reduced [NADPH--hemoprotein reductase] + O2 = gentisyl alcohol + oxidized [NADPH--hemoprotein reductase] + H2O + H(+)</text>
        <dbReference type="Rhea" id="RHEA:62212"/>
        <dbReference type="Rhea" id="RHEA-COMP:11964"/>
        <dbReference type="Rhea" id="RHEA-COMP:11965"/>
        <dbReference type="ChEBI" id="CHEBI:5325"/>
        <dbReference type="ChEBI" id="CHEBI:15377"/>
        <dbReference type="ChEBI" id="CHEBI:15378"/>
        <dbReference type="ChEBI" id="CHEBI:15379"/>
        <dbReference type="ChEBI" id="CHEBI:17069"/>
        <dbReference type="ChEBI" id="CHEBI:57618"/>
        <dbReference type="ChEBI" id="CHEBI:58210"/>
    </reaction>
    <physiologicalReaction direction="left-to-right" evidence="6">
        <dbReference type="Rhea" id="RHEA:62213"/>
    </physiologicalReaction>
</comment>
<comment type="cofactor">
    <cofactor evidence="2">
        <name>heme</name>
        <dbReference type="ChEBI" id="CHEBI:30413"/>
    </cofactor>
</comment>
<comment type="pathway">
    <text evidence="6">Mycotoxin biosynthesis; patulin biosynthesis.</text>
</comment>
<comment type="subcellular location">
    <subcellularLocation>
        <location evidence="1">Endoplasmic reticulum membrane</location>
        <topology evidence="3">Single-pass membrane protein</topology>
    </subcellularLocation>
</comment>
<comment type="biotechnology">
    <text evidence="5 7 8">Patulin was originally used as an antibiotic and specifically trialed to be used against the common cold, but it is no longer used for that purpose since it has been shown to induce immunological, neurological and gastrointestinal effects (PubMed:15082620). Genotoxic effects of patulin with dose-dependent increase in DNA strand breaks in brain, liver and kidneys have been detected in mice (PubMed:22222931). However, more recently, it has been proposed that patulin might also have anti-tumor properties (PubMed:26619846).</text>
</comment>
<comment type="similarity">
    <text evidence="10">Belongs to the cytochrome P450 family.</text>
</comment>
<comment type="sequence caution" evidence="10">
    <conflict type="erroneous initiation">
        <sequence resource="EMBL-CDS" id="EAW11665"/>
    </conflict>
    <text>Extended N-terminus.</text>
</comment>